<gene>
    <name evidence="1" type="primary">SLC39A14</name>
</gene>
<sequence length="490" mass="53965">MKLLHPAFQSCLLLTLLGLWRTTPEAHASSPGAPAISAASFLQDLIHRYGEGDSLTLQQLKALLNHLDVGVGRGNVTQHVQGHRNLSTCFSSGDLFAAHNFSEQSRIGSSELQEFCPTILQQLDSRACTSENQENEENEQTEEGWPSAVEVWGYGLLCVTVISLCSLLGASVVPFMKKTFYKRLLLYFIALAIGTLYSNALFQLIPEAFGFNPLEDYYVSKSAVVFGGFYLFFFTEKILKILLKQKNEHHHGHSHYASETLPSKKDQEEGVMEKLQNGDLDHMIPQHCNSELDGKAPVVDEKVIVGSLSVQDLQASQSACYWLKGVRYSDIGTLAWMITLSDGLHNFIDGLAIGASFTVSVFQGISTSVAILCEEFPHELGDFVILLNAGMSIQQALFFNFLSACCCYLGLAFGILAGSHFSANWIFALAGGMFLYISLADMFPEMNEVCQEDERKGSILIPFVIQNLGLLTGFTIMVVLTMYSGQIQIG</sequence>
<organism>
    <name type="scientific">Pongo abelii</name>
    <name type="common">Sumatran orangutan</name>
    <name type="synonym">Pongo pygmaeus abelii</name>
    <dbReference type="NCBI Taxonomy" id="9601"/>
    <lineage>
        <taxon>Eukaryota</taxon>
        <taxon>Metazoa</taxon>
        <taxon>Chordata</taxon>
        <taxon>Craniata</taxon>
        <taxon>Vertebrata</taxon>
        <taxon>Euteleostomi</taxon>
        <taxon>Mammalia</taxon>
        <taxon>Eutheria</taxon>
        <taxon>Euarchontoglires</taxon>
        <taxon>Primates</taxon>
        <taxon>Haplorrhini</taxon>
        <taxon>Catarrhini</taxon>
        <taxon>Hominidae</taxon>
        <taxon>Pongo</taxon>
    </lineage>
</organism>
<dbReference type="EMBL" id="CR859101">
    <property type="protein sequence ID" value="CAH91293.1"/>
    <property type="molecule type" value="mRNA"/>
</dbReference>
<dbReference type="SMR" id="Q5RAB7"/>
<dbReference type="FunCoup" id="Q5RAB7">
    <property type="interactions" value="632"/>
</dbReference>
<dbReference type="STRING" id="9601.ENSPPYP00000020643"/>
<dbReference type="GlyCosmos" id="Q5RAB7">
    <property type="glycosylation" value="3 sites, No reported glycans"/>
</dbReference>
<dbReference type="eggNOG" id="KOG2693">
    <property type="taxonomic scope" value="Eukaryota"/>
</dbReference>
<dbReference type="InParanoid" id="Q5RAB7"/>
<dbReference type="Proteomes" id="UP000001595">
    <property type="component" value="Unplaced"/>
</dbReference>
<dbReference type="GO" id="GO:0016324">
    <property type="term" value="C:apical plasma membrane"/>
    <property type="evidence" value="ECO:0000250"/>
    <property type="project" value="UniProtKB"/>
</dbReference>
<dbReference type="GO" id="GO:0016323">
    <property type="term" value="C:basolateral plasma membrane"/>
    <property type="evidence" value="ECO:0000250"/>
    <property type="project" value="UniProtKB"/>
</dbReference>
<dbReference type="GO" id="GO:0031901">
    <property type="term" value="C:early endosome membrane"/>
    <property type="evidence" value="ECO:0000250"/>
    <property type="project" value="UniProtKB"/>
</dbReference>
<dbReference type="GO" id="GO:0031902">
    <property type="term" value="C:late endosome membrane"/>
    <property type="evidence" value="ECO:0000250"/>
    <property type="project" value="UniProtKB"/>
</dbReference>
<dbReference type="GO" id="GO:0005765">
    <property type="term" value="C:lysosomal membrane"/>
    <property type="evidence" value="ECO:0007669"/>
    <property type="project" value="UniProtKB-SubCell"/>
</dbReference>
<dbReference type="GO" id="GO:0005886">
    <property type="term" value="C:plasma membrane"/>
    <property type="evidence" value="ECO:0000250"/>
    <property type="project" value="UniProtKB"/>
</dbReference>
<dbReference type="GO" id="GO:0015086">
    <property type="term" value="F:cadmium ion transmembrane transporter activity"/>
    <property type="evidence" value="ECO:0000250"/>
    <property type="project" value="UniProtKB"/>
</dbReference>
<dbReference type="GO" id="GO:0005381">
    <property type="term" value="F:iron ion transmembrane transporter activity"/>
    <property type="evidence" value="ECO:0000250"/>
    <property type="project" value="UniProtKB"/>
</dbReference>
<dbReference type="GO" id="GO:0005384">
    <property type="term" value="F:manganese ion transmembrane transporter activity"/>
    <property type="evidence" value="ECO:0000250"/>
    <property type="project" value="UniProtKB"/>
</dbReference>
<dbReference type="GO" id="GO:0015296">
    <property type="term" value="F:monoatomic anion:monoatomic cation symporter activity"/>
    <property type="evidence" value="ECO:0000250"/>
    <property type="project" value="UniProtKB"/>
</dbReference>
<dbReference type="GO" id="GO:0140410">
    <property type="term" value="F:monoatomic cation:bicarbonate symporter activity"/>
    <property type="evidence" value="ECO:0007669"/>
    <property type="project" value="TreeGrafter"/>
</dbReference>
<dbReference type="GO" id="GO:0005385">
    <property type="term" value="F:zinc ion transmembrane transporter activity"/>
    <property type="evidence" value="ECO:0000250"/>
    <property type="project" value="UniProtKB"/>
</dbReference>
<dbReference type="GO" id="GO:0071333">
    <property type="term" value="P:cellular response to glucose stimulus"/>
    <property type="evidence" value="ECO:0000250"/>
    <property type="project" value="UniProtKB"/>
</dbReference>
<dbReference type="GO" id="GO:0032869">
    <property type="term" value="P:cellular response to insulin stimulus"/>
    <property type="evidence" value="ECO:0000250"/>
    <property type="project" value="UniProtKB"/>
</dbReference>
<dbReference type="GO" id="GO:0002062">
    <property type="term" value="P:chondrocyte differentiation"/>
    <property type="evidence" value="ECO:0000250"/>
    <property type="project" value="UniProtKB"/>
</dbReference>
<dbReference type="GO" id="GO:0006094">
    <property type="term" value="P:gluconeogenesis"/>
    <property type="evidence" value="ECO:0000250"/>
    <property type="project" value="UniProtKB"/>
</dbReference>
<dbReference type="GO" id="GO:0098662">
    <property type="term" value="P:inorganic cation transmembrane transport"/>
    <property type="evidence" value="ECO:0000250"/>
    <property type="project" value="UniProtKB"/>
</dbReference>
<dbReference type="GO" id="GO:0008286">
    <property type="term" value="P:insulin receptor signaling pathway"/>
    <property type="evidence" value="ECO:0000250"/>
    <property type="project" value="UniProtKB"/>
</dbReference>
<dbReference type="GO" id="GO:0006882">
    <property type="term" value="P:intracellular zinc ion homeostasis"/>
    <property type="evidence" value="ECO:0000250"/>
    <property type="project" value="UniProtKB"/>
</dbReference>
<dbReference type="GO" id="GO:0055071">
    <property type="term" value="P:manganese ion homeostasis"/>
    <property type="evidence" value="ECO:0000250"/>
    <property type="project" value="UniProtKB"/>
</dbReference>
<dbReference type="GO" id="GO:0045745">
    <property type="term" value="P:positive regulation of G protein-coupled receptor signaling pathway"/>
    <property type="evidence" value="ECO:0000250"/>
    <property type="project" value="UniProtKB"/>
</dbReference>
<dbReference type="GO" id="GO:0010817">
    <property type="term" value="P:regulation of hormone levels"/>
    <property type="evidence" value="ECO:0000250"/>
    <property type="project" value="UniProtKB"/>
</dbReference>
<dbReference type="GO" id="GO:0071578">
    <property type="term" value="P:zinc ion import across plasma membrane"/>
    <property type="evidence" value="ECO:0000250"/>
    <property type="project" value="UniProtKB"/>
</dbReference>
<dbReference type="GO" id="GO:0071577">
    <property type="term" value="P:zinc ion transmembrane transport"/>
    <property type="evidence" value="ECO:0000250"/>
    <property type="project" value="UniProtKB"/>
</dbReference>
<dbReference type="InterPro" id="IPR003689">
    <property type="entry name" value="ZIP"/>
</dbReference>
<dbReference type="InterPro" id="IPR050799">
    <property type="entry name" value="ZIP_Transporter"/>
</dbReference>
<dbReference type="PANTHER" id="PTHR12191:SF5">
    <property type="entry name" value="METAL CATION SYMPORTER ZIP14"/>
    <property type="match status" value="1"/>
</dbReference>
<dbReference type="PANTHER" id="PTHR12191">
    <property type="entry name" value="SOLUTE CARRIER FAMILY 39"/>
    <property type="match status" value="1"/>
</dbReference>
<dbReference type="Pfam" id="PF02535">
    <property type="entry name" value="Zip"/>
    <property type="match status" value="1"/>
</dbReference>
<protein>
    <recommendedName>
        <fullName evidence="1">Metal cation symporter ZIP14</fullName>
    </recommendedName>
    <alternativeName>
        <fullName evidence="1">Solute carrier family 39 member 14</fullName>
    </alternativeName>
    <alternativeName>
        <fullName evidence="1">Zrt- and Irt-like protein 14</fullName>
        <shortName evidence="1">ZIP-14</shortName>
    </alternativeName>
</protein>
<accession>Q5RAB7</accession>
<feature type="signal peptide" evidence="3">
    <location>
        <begin position="1"/>
        <end position="28"/>
    </location>
</feature>
<feature type="chain" id="PRO_0000312196" description="Metal cation symporter ZIP14">
    <location>
        <begin position="29"/>
        <end position="490"/>
    </location>
</feature>
<feature type="topological domain" description="Extracellular" evidence="3">
    <location>
        <begin position="29"/>
        <end position="155"/>
    </location>
</feature>
<feature type="transmembrane region" description="Helical" evidence="3">
    <location>
        <begin position="156"/>
        <end position="176"/>
    </location>
</feature>
<feature type="topological domain" description="Cytoplasmic" evidence="3">
    <location>
        <begin position="177"/>
        <end position="184"/>
    </location>
</feature>
<feature type="transmembrane region" description="Helical" evidence="3">
    <location>
        <begin position="185"/>
        <end position="205"/>
    </location>
</feature>
<feature type="topological domain" description="Extracellular" evidence="3">
    <location>
        <begin position="206"/>
        <end position="222"/>
    </location>
</feature>
<feature type="transmembrane region" description="Helical" evidence="3">
    <location>
        <begin position="223"/>
        <end position="243"/>
    </location>
</feature>
<feature type="topological domain" description="Cytoplasmic" evidence="3">
    <location>
        <begin position="244"/>
        <end position="395"/>
    </location>
</feature>
<feature type="transmembrane region" description="Helical" evidence="3">
    <location>
        <begin position="396"/>
        <end position="416"/>
    </location>
</feature>
<feature type="topological domain" description="Extracellular" evidence="3">
    <location>
        <begin position="417"/>
        <end position="422"/>
    </location>
</feature>
<feature type="transmembrane region" description="Helical" evidence="3">
    <location>
        <begin position="423"/>
        <end position="443"/>
    </location>
</feature>
<feature type="topological domain" description="Cytoplasmic" evidence="3">
    <location>
        <begin position="444"/>
        <end position="458"/>
    </location>
</feature>
<feature type="transmembrane region" description="Helical" evidence="3">
    <location>
        <begin position="459"/>
        <end position="479"/>
    </location>
</feature>
<feature type="topological domain" description="Extracellular" evidence="3">
    <location>
        <begin position="480"/>
        <end position="490"/>
    </location>
</feature>
<feature type="short sequence motif" description="HHHGHXHX-motif" evidence="1">
    <location>
        <begin position="249"/>
        <end position="256"/>
    </location>
</feature>
<feature type="short sequence motif" description="XEXPHE-motif" evidence="1">
    <location>
        <begin position="374"/>
        <end position="379"/>
    </location>
</feature>
<feature type="glycosylation site" description="N-linked (GlcNAc...) asparagine" evidence="3">
    <location>
        <position position="75"/>
    </location>
</feature>
<feature type="glycosylation site" description="N-linked (GlcNAc...) asparagine" evidence="3">
    <location>
        <position position="85"/>
    </location>
</feature>
<feature type="glycosylation site" description="N-linked (GlcNAc...) asparagine" evidence="3">
    <location>
        <position position="100"/>
    </location>
</feature>
<name>S39AE_PONAB</name>
<keyword id="KW-1003">Cell membrane</keyword>
<keyword id="KW-0967">Endosome</keyword>
<keyword id="KW-0325">Glycoprotein</keyword>
<keyword id="KW-0406">Ion transport</keyword>
<keyword id="KW-0458">Lysosome</keyword>
<keyword id="KW-0472">Membrane</keyword>
<keyword id="KW-1185">Reference proteome</keyword>
<keyword id="KW-0732">Signal</keyword>
<keyword id="KW-0812">Transmembrane</keyword>
<keyword id="KW-1133">Transmembrane helix</keyword>
<keyword id="KW-0813">Transport</keyword>
<keyword id="KW-0832">Ubl conjugation</keyword>
<keyword id="KW-0862">Zinc</keyword>
<keyword id="KW-0864">Zinc transport</keyword>
<comment type="function">
    <text evidence="1 2">Electroneutral transporter of the plasma membrane mediating the cellular uptake of the divalent metal cations zinc, manganese and iron that are important for tissue homeostasis, metabolism, development and immunity (By similarity). Functions as an energy-dependent symporter, transporting through the membranes an electroneutral complex composed of a divalent metal cation and two bicarbonate anions. Beside these endogenous cellular substrates, can also import cadmium a non-essential metal which is cytotoxic and carcinogenic. Controls the cellular uptake by the intestinal epithelium of systemic zinc, which is in turn required to maintain tight junctions and the intestinal permeability. Modifies the activity of zinc-dependent phosphodiesterases, thereby indirectly regulating G protein-coupled receptor signaling pathways important for gluconeogenesis and chondrocyte differentiation (By similarity). Regulates insulin receptor signaling, glucose uptake, glycogen synthesis and gluconeogenesis in hepatocytes through the zinc-dependent intracellular catabolism of insulin (By similarity). Through zinc cellular uptake also plays a role in the adaptation of cells to endoplasmic reticulum stress (By similarity). Major manganese transporter of the basolateral membrane of intestinal epithelial cells, it plays a central role in manganese systemic homeostasis through intestinal manganese uptake. Also involved in manganese extracellular uptake by cells of the blood-brain barrier (By similarity). May also play a role in manganese and zinc homeostasis participating in their elimination from the blood through the hepatobiliary excretion (By similarity). Also functions in the extracellular uptake of free iron. May also function intracellularly and mediate the transport from endosomes to cytosol of iron endocytosed by transferrin. Plays a role in innate immunity by regulating the expression of cytokines by activated macrophages (By similarity).</text>
</comment>
<comment type="catalytic activity">
    <reaction evidence="2">
        <text>Zn(2+)(out) + 2 hydrogencarbonate(out) = Zn(2+)(in) + 2 hydrogencarbonate(in)</text>
        <dbReference type="Rhea" id="RHEA:62252"/>
        <dbReference type="ChEBI" id="CHEBI:17544"/>
        <dbReference type="ChEBI" id="CHEBI:29105"/>
    </reaction>
    <physiologicalReaction direction="left-to-right" evidence="2">
        <dbReference type="Rhea" id="RHEA:62253"/>
    </physiologicalReaction>
</comment>
<comment type="catalytic activity">
    <reaction evidence="2">
        <text>Mn(2+)(out) + 2 hydrogencarbonate(out) = Mn(2+)(in) + 2 hydrogencarbonate(in)</text>
        <dbReference type="Rhea" id="RHEA:62260"/>
        <dbReference type="ChEBI" id="CHEBI:17544"/>
        <dbReference type="ChEBI" id="CHEBI:29035"/>
    </reaction>
    <physiologicalReaction direction="left-to-right" evidence="2">
        <dbReference type="Rhea" id="RHEA:62261"/>
    </physiologicalReaction>
</comment>
<comment type="catalytic activity">
    <reaction evidence="2">
        <text>Fe(2+)(out) + 2 hydrogencarbonate(out) = Fe(2+)(in) + 2 hydrogencarbonate(in)</text>
        <dbReference type="Rhea" id="RHEA:62368"/>
        <dbReference type="ChEBI" id="CHEBI:17544"/>
        <dbReference type="ChEBI" id="CHEBI:29033"/>
    </reaction>
    <physiologicalReaction direction="left-to-right" evidence="2">
        <dbReference type="Rhea" id="RHEA:62369"/>
    </physiologicalReaction>
</comment>
<comment type="catalytic activity">
    <reaction evidence="2">
        <text>Cd(2+)(out) + 2 hydrogencarbonate(out) = Cd(2+)(in) + 2 hydrogencarbonate(in)</text>
        <dbReference type="Rhea" id="RHEA:62256"/>
        <dbReference type="ChEBI" id="CHEBI:17544"/>
        <dbReference type="ChEBI" id="CHEBI:48775"/>
    </reaction>
    <physiologicalReaction direction="left-to-right" evidence="2">
        <dbReference type="Rhea" id="RHEA:62257"/>
    </physiologicalReaction>
</comment>
<comment type="subunit">
    <text evidence="1">Homotrimer.</text>
</comment>
<comment type="subcellular location">
    <subcellularLocation>
        <location evidence="1">Cell membrane</location>
        <topology evidence="3">Multi-pass membrane protein</topology>
    </subcellularLocation>
    <subcellularLocation>
        <location evidence="1">Apical cell membrane</location>
        <topology evidence="3">Multi-pass membrane protein</topology>
    </subcellularLocation>
    <subcellularLocation>
        <location evidence="1">Basolateral cell membrane</location>
        <topology evidence="3">Multi-pass membrane protein</topology>
    </subcellularLocation>
    <subcellularLocation>
        <location evidence="1">Early endosome membrane</location>
        <topology evidence="3">Multi-pass membrane protein</topology>
    </subcellularLocation>
    <subcellularLocation>
        <location evidence="1">Late endosome membrane</location>
        <topology evidence="3">Multi-pass membrane protein</topology>
    </subcellularLocation>
    <subcellularLocation>
        <location evidence="1">Lysosome membrane</location>
        <topology evidence="3">Multi-pass membrane protein</topology>
    </subcellularLocation>
    <text evidence="1">Localized and functional at both apical and basolateral membranes of microvascular capillary endothelial cells that constitute the blood-brain barrier. Localized at the basolateral membrane of enterocytes. Enriched at the plasma membrane upon glucose uptake.</text>
</comment>
<comment type="PTM">
    <text evidence="1">Ubiquitinated. Ubiquitination occurs upon iron depletion. The ubiquitinated form undergoes proteasomal degradation.</text>
</comment>
<comment type="PTM">
    <text evidence="1">N-glycosylated. N-glycosylation at Asn-100 is required for iron-regulated extraction of the transporter from membranes and subsequent proteasomal degradation.</text>
</comment>
<comment type="similarity">
    <text evidence="4">Belongs to the ZIP transporter (TC 2.A.5) family.</text>
</comment>
<proteinExistence type="evidence at transcript level"/>
<evidence type="ECO:0000250" key="1">
    <source>
        <dbReference type="UniProtKB" id="Q15043"/>
    </source>
</evidence>
<evidence type="ECO:0000250" key="2">
    <source>
        <dbReference type="UniProtKB" id="Q75N73"/>
    </source>
</evidence>
<evidence type="ECO:0000255" key="3"/>
<evidence type="ECO:0000305" key="4"/>
<reference key="1">
    <citation type="submission" date="2004-11" db="EMBL/GenBank/DDBJ databases">
        <authorList>
            <consortium name="The German cDNA consortium"/>
        </authorList>
    </citation>
    <scope>NUCLEOTIDE SEQUENCE [LARGE SCALE MRNA]</scope>
    <source>
        <tissue>Brain cortex</tissue>
    </source>
</reference>